<protein>
    <recommendedName>
        <fullName evidence="1">Pantothenate synthetase</fullName>
        <shortName evidence="1">PS</shortName>
        <ecNumber evidence="1">6.3.2.1</ecNumber>
    </recommendedName>
    <alternativeName>
        <fullName evidence="1">Pantoate--beta-alanine ligase</fullName>
    </alternativeName>
    <alternativeName>
        <fullName evidence="1">Pantoate-activating enzyme</fullName>
    </alternativeName>
</protein>
<feature type="chain" id="PRO_0000128203" description="Pantothenate synthetase">
    <location>
        <begin position="1"/>
        <end position="288"/>
    </location>
</feature>
<feature type="active site" description="Proton donor" evidence="1">
    <location>
        <position position="37"/>
    </location>
</feature>
<feature type="binding site" evidence="1">
    <location>
        <begin position="30"/>
        <end position="37"/>
    </location>
    <ligand>
        <name>ATP</name>
        <dbReference type="ChEBI" id="CHEBI:30616"/>
    </ligand>
</feature>
<feature type="binding site" evidence="1">
    <location>
        <position position="61"/>
    </location>
    <ligand>
        <name>(R)-pantoate</name>
        <dbReference type="ChEBI" id="CHEBI:15980"/>
    </ligand>
</feature>
<feature type="binding site" evidence="1">
    <location>
        <position position="61"/>
    </location>
    <ligand>
        <name>beta-alanine</name>
        <dbReference type="ChEBI" id="CHEBI:57966"/>
    </ligand>
</feature>
<feature type="binding site" evidence="1">
    <location>
        <begin position="147"/>
        <end position="150"/>
    </location>
    <ligand>
        <name>ATP</name>
        <dbReference type="ChEBI" id="CHEBI:30616"/>
    </ligand>
</feature>
<feature type="binding site" evidence="1">
    <location>
        <position position="153"/>
    </location>
    <ligand>
        <name>(R)-pantoate</name>
        <dbReference type="ChEBI" id="CHEBI:15980"/>
    </ligand>
</feature>
<feature type="binding site" evidence="1">
    <location>
        <begin position="184"/>
        <end position="187"/>
    </location>
    <ligand>
        <name>ATP</name>
        <dbReference type="ChEBI" id="CHEBI:30616"/>
    </ligand>
</feature>
<organism>
    <name type="scientific">Bacillus licheniformis (strain ATCC 14580 / DSM 13 / JCM 2505 / CCUG 7422 / NBRC 12200 / NCIMB 9375 / NCTC 10341 / NRRL NRS-1264 / Gibson 46)</name>
    <dbReference type="NCBI Taxonomy" id="279010"/>
    <lineage>
        <taxon>Bacteria</taxon>
        <taxon>Bacillati</taxon>
        <taxon>Bacillota</taxon>
        <taxon>Bacilli</taxon>
        <taxon>Bacillales</taxon>
        <taxon>Bacillaceae</taxon>
        <taxon>Bacillus</taxon>
    </lineage>
</organism>
<proteinExistence type="inferred from homology"/>
<reference key="1">
    <citation type="journal article" date="2004" name="J. Mol. Microbiol. Biotechnol.">
        <title>The complete genome sequence of Bacillus licheniformis DSM13, an organism with great industrial potential.</title>
        <authorList>
            <person name="Veith B."/>
            <person name="Herzberg C."/>
            <person name="Steckel S."/>
            <person name="Feesche J."/>
            <person name="Maurer K.H."/>
            <person name="Ehrenreich P."/>
            <person name="Baeumer S."/>
            <person name="Henne A."/>
            <person name="Liesegang H."/>
            <person name="Merkl R."/>
            <person name="Ehrenreich A."/>
            <person name="Gottschalk G."/>
        </authorList>
    </citation>
    <scope>NUCLEOTIDE SEQUENCE [LARGE SCALE GENOMIC DNA]</scope>
    <source>
        <strain>ATCC 14580 / DSM 13 / JCM 2505 / CCUG 7422 / NBRC 12200 / NCIMB 9375 / NCTC 10341 / NRRL NRS-1264 / Gibson 46</strain>
    </source>
</reference>
<reference key="2">
    <citation type="journal article" date="2004" name="Genome Biol.">
        <title>Complete genome sequence of the industrial bacterium Bacillus licheniformis and comparisons with closely related Bacillus species.</title>
        <authorList>
            <person name="Rey M.W."/>
            <person name="Ramaiya P."/>
            <person name="Nelson B.A."/>
            <person name="Brody-Karpin S.D."/>
            <person name="Zaretsky E.J."/>
            <person name="Tang M."/>
            <person name="Lopez de Leon A."/>
            <person name="Xiang H."/>
            <person name="Gusti V."/>
            <person name="Clausen I.G."/>
            <person name="Olsen P.B."/>
            <person name="Rasmussen M.D."/>
            <person name="Andersen J.T."/>
            <person name="Joergensen P.L."/>
            <person name="Larsen T.S."/>
            <person name="Sorokin A."/>
            <person name="Bolotin A."/>
            <person name="Lapidus A."/>
            <person name="Galleron N."/>
            <person name="Ehrlich S.D."/>
            <person name="Berka R.M."/>
        </authorList>
    </citation>
    <scope>NUCLEOTIDE SEQUENCE [LARGE SCALE GENOMIC DNA]</scope>
    <source>
        <strain>ATCC 14580 / DSM 13 / JCM 2505 / CCUG 7422 / NBRC 12200 / NCIMB 9375 / NCTC 10341 / NRRL NRS-1264 / Gibson 46</strain>
    </source>
</reference>
<keyword id="KW-0067">ATP-binding</keyword>
<keyword id="KW-0963">Cytoplasm</keyword>
<keyword id="KW-0436">Ligase</keyword>
<keyword id="KW-0547">Nucleotide-binding</keyword>
<keyword id="KW-0566">Pantothenate biosynthesis</keyword>
<keyword id="KW-1185">Reference proteome</keyword>
<accession>Q65I57</accession>
<accession>Q62TK6</accession>
<name>PANC_BACLD</name>
<evidence type="ECO:0000255" key="1">
    <source>
        <dbReference type="HAMAP-Rule" id="MF_00158"/>
    </source>
</evidence>
<gene>
    <name evidence="1" type="primary">panC</name>
    <name type="ordered locus">BLi02377</name>
    <name type="ordered locus">BL02751</name>
</gene>
<dbReference type="EC" id="6.3.2.1" evidence="1"/>
<dbReference type="EMBL" id="AE017333">
    <property type="protein sequence ID" value="AAU41257.1"/>
    <property type="molecule type" value="Genomic_DNA"/>
</dbReference>
<dbReference type="EMBL" id="CP000002">
    <property type="protein sequence ID" value="AAU23903.1"/>
    <property type="molecule type" value="Genomic_DNA"/>
</dbReference>
<dbReference type="RefSeq" id="WP_003182920.1">
    <property type="nucleotide sequence ID" value="NC_006322.1"/>
</dbReference>
<dbReference type="SMR" id="Q65I57"/>
<dbReference type="STRING" id="279010.BL02751"/>
<dbReference type="GeneID" id="92861024"/>
<dbReference type="KEGG" id="bld:BLi02377"/>
<dbReference type="KEGG" id="bli:BL02751"/>
<dbReference type="eggNOG" id="COG0414">
    <property type="taxonomic scope" value="Bacteria"/>
</dbReference>
<dbReference type="HOGENOM" id="CLU_047148_0_0_9"/>
<dbReference type="UniPathway" id="UPA00028">
    <property type="reaction ID" value="UER00005"/>
</dbReference>
<dbReference type="Proteomes" id="UP000000606">
    <property type="component" value="Chromosome"/>
</dbReference>
<dbReference type="Bgee" id="BL02751">
    <property type="expression patterns" value="Expressed in blastula and 4 other cell types or tissues"/>
</dbReference>
<dbReference type="GO" id="GO:0005829">
    <property type="term" value="C:cytosol"/>
    <property type="evidence" value="ECO:0007669"/>
    <property type="project" value="TreeGrafter"/>
</dbReference>
<dbReference type="GO" id="GO:0005524">
    <property type="term" value="F:ATP binding"/>
    <property type="evidence" value="ECO:0007669"/>
    <property type="project" value="UniProtKB-KW"/>
</dbReference>
<dbReference type="GO" id="GO:0004592">
    <property type="term" value="F:pantoate-beta-alanine ligase activity"/>
    <property type="evidence" value="ECO:0007669"/>
    <property type="project" value="UniProtKB-UniRule"/>
</dbReference>
<dbReference type="GO" id="GO:0015940">
    <property type="term" value="P:pantothenate biosynthetic process"/>
    <property type="evidence" value="ECO:0007669"/>
    <property type="project" value="UniProtKB-UniRule"/>
</dbReference>
<dbReference type="CDD" id="cd00560">
    <property type="entry name" value="PanC"/>
    <property type="match status" value="1"/>
</dbReference>
<dbReference type="FunFam" id="3.30.1300.10:FF:000001">
    <property type="entry name" value="Pantothenate synthetase"/>
    <property type="match status" value="1"/>
</dbReference>
<dbReference type="FunFam" id="3.40.50.620:FF:000013">
    <property type="entry name" value="Pantothenate synthetase"/>
    <property type="match status" value="1"/>
</dbReference>
<dbReference type="Gene3D" id="3.40.50.620">
    <property type="entry name" value="HUPs"/>
    <property type="match status" value="1"/>
</dbReference>
<dbReference type="Gene3D" id="3.30.1300.10">
    <property type="entry name" value="Pantoate-beta-alanine ligase, C-terminal domain"/>
    <property type="match status" value="1"/>
</dbReference>
<dbReference type="HAMAP" id="MF_00158">
    <property type="entry name" value="PanC"/>
    <property type="match status" value="1"/>
</dbReference>
<dbReference type="InterPro" id="IPR004821">
    <property type="entry name" value="Cyt_trans-like"/>
</dbReference>
<dbReference type="InterPro" id="IPR003721">
    <property type="entry name" value="Pantoate_ligase"/>
</dbReference>
<dbReference type="InterPro" id="IPR042176">
    <property type="entry name" value="Pantoate_ligase_C"/>
</dbReference>
<dbReference type="InterPro" id="IPR014729">
    <property type="entry name" value="Rossmann-like_a/b/a_fold"/>
</dbReference>
<dbReference type="NCBIfam" id="TIGR00125">
    <property type="entry name" value="cyt_tran_rel"/>
    <property type="match status" value="1"/>
</dbReference>
<dbReference type="NCBIfam" id="TIGR00018">
    <property type="entry name" value="panC"/>
    <property type="match status" value="1"/>
</dbReference>
<dbReference type="PANTHER" id="PTHR21299">
    <property type="entry name" value="CYTIDYLATE KINASE/PANTOATE-BETA-ALANINE LIGASE"/>
    <property type="match status" value="1"/>
</dbReference>
<dbReference type="PANTHER" id="PTHR21299:SF1">
    <property type="entry name" value="PANTOATE--BETA-ALANINE LIGASE"/>
    <property type="match status" value="1"/>
</dbReference>
<dbReference type="Pfam" id="PF02569">
    <property type="entry name" value="Pantoate_ligase"/>
    <property type="match status" value="1"/>
</dbReference>
<dbReference type="SUPFAM" id="SSF52374">
    <property type="entry name" value="Nucleotidylyl transferase"/>
    <property type="match status" value="1"/>
</dbReference>
<sequence>MIQIYTAKDIQNLTKNYRKEGKTIGFVPTMGFLHEGHMSLVEKARKDNDIVVMSIFVNPMQFGPGEDYEAYPRDIERDRQLAAGSGVDVLFTPEPEEMYGQEPTVTASVKKRTDVLCGRSREGHFDGVATVLTKLFNLTSPTRVYFGMKDAQQVAVVDGLINDFFMDIELIPVETKREEDGLAKSSRNVNLRAEERQEATALYRALQRGAELIRNGERDPEAVKREIRSILEKTSGVIDYADIYSYPDLEIRDPLTGKVIIAVAVQFSKARLIDNIIVDIPADQKEDL</sequence>
<comment type="function">
    <text evidence="1">Catalyzes the condensation of pantoate with beta-alanine in an ATP-dependent reaction via a pantoyl-adenylate intermediate.</text>
</comment>
<comment type="catalytic activity">
    <reaction evidence="1">
        <text>(R)-pantoate + beta-alanine + ATP = (R)-pantothenate + AMP + diphosphate + H(+)</text>
        <dbReference type="Rhea" id="RHEA:10912"/>
        <dbReference type="ChEBI" id="CHEBI:15378"/>
        <dbReference type="ChEBI" id="CHEBI:15980"/>
        <dbReference type="ChEBI" id="CHEBI:29032"/>
        <dbReference type="ChEBI" id="CHEBI:30616"/>
        <dbReference type="ChEBI" id="CHEBI:33019"/>
        <dbReference type="ChEBI" id="CHEBI:57966"/>
        <dbReference type="ChEBI" id="CHEBI:456215"/>
        <dbReference type="EC" id="6.3.2.1"/>
    </reaction>
</comment>
<comment type="pathway">
    <text evidence="1">Cofactor biosynthesis; (R)-pantothenate biosynthesis; (R)-pantothenate from (R)-pantoate and beta-alanine: step 1/1.</text>
</comment>
<comment type="subunit">
    <text evidence="1">Homodimer.</text>
</comment>
<comment type="subcellular location">
    <subcellularLocation>
        <location evidence="1">Cytoplasm</location>
    </subcellularLocation>
</comment>
<comment type="miscellaneous">
    <text evidence="1">The reaction proceeds by a bi uni uni bi ping pong mechanism.</text>
</comment>
<comment type="similarity">
    <text evidence="1">Belongs to the pantothenate synthetase family.</text>
</comment>